<keyword id="KW-0223">Dioxygenase</keyword>
<keyword id="KW-0408">Iron</keyword>
<keyword id="KW-0479">Metal-binding</keyword>
<keyword id="KW-0560">Oxidoreductase</keyword>
<keyword id="KW-0585">Phenylalanine catabolism</keyword>
<keyword id="KW-1185">Reference proteome</keyword>
<keyword id="KW-0677">Repeat</keyword>
<keyword id="KW-0828">Tyrosine catabolism</keyword>
<gene>
    <name type="ordered locus">YALI0B21846g</name>
</gene>
<feature type="chain" id="PRO_0000088407" description="4-hydroxyphenylpyruvate dioxygenase">
    <location>
        <begin position="1"/>
        <end position="394"/>
    </location>
</feature>
<feature type="domain" description="VOC 1" evidence="2">
    <location>
        <begin position="27"/>
        <end position="161"/>
    </location>
</feature>
<feature type="domain" description="VOC 2" evidence="2">
    <location>
        <begin position="193"/>
        <end position="351"/>
    </location>
</feature>
<feature type="binding site" evidence="1">
    <location>
        <position position="196"/>
    </location>
    <ligand>
        <name>Fe cation</name>
        <dbReference type="ChEBI" id="CHEBI:24875"/>
    </ligand>
</feature>
<feature type="binding site" evidence="1">
    <location>
        <position position="279"/>
    </location>
    <ligand>
        <name>Fe cation</name>
        <dbReference type="ChEBI" id="CHEBI:24875"/>
    </ligand>
</feature>
<feature type="binding site" evidence="1">
    <location>
        <position position="362"/>
    </location>
    <ligand>
        <name>Fe cation</name>
        <dbReference type="ChEBI" id="CHEBI:24875"/>
    </ligand>
</feature>
<protein>
    <recommendedName>
        <fullName>4-hydroxyphenylpyruvate dioxygenase</fullName>
        <shortName>4HPPD</shortName>
        <shortName>HPD</shortName>
        <shortName>HPPDase</shortName>
        <ecNumber>1.13.11.27</ecNumber>
    </recommendedName>
</protein>
<organism>
    <name type="scientific">Yarrowia lipolytica (strain CLIB 122 / E 150)</name>
    <name type="common">Yeast</name>
    <name type="synonym">Candida lipolytica</name>
    <dbReference type="NCBI Taxonomy" id="284591"/>
    <lineage>
        <taxon>Eukaryota</taxon>
        <taxon>Fungi</taxon>
        <taxon>Dikarya</taxon>
        <taxon>Ascomycota</taxon>
        <taxon>Saccharomycotina</taxon>
        <taxon>Dipodascomycetes</taxon>
        <taxon>Dipodascales</taxon>
        <taxon>Dipodascales incertae sedis</taxon>
        <taxon>Yarrowia</taxon>
    </lineage>
</organism>
<name>HPPD_YARLI</name>
<reference key="1">
    <citation type="journal article" date="2004" name="Nature">
        <title>Genome evolution in yeasts.</title>
        <authorList>
            <person name="Dujon B."/>
            <person name="Sherman D."/>
            <person name="Fischer G."/>
            <person name="Durrens P."/>
            <person name="Casaregola S."/>
            <person name="Lafontaine I."/>
            <person name="de Montigny J."/>
            <person name="Marck C."/>
            <person name="Neuveglise C."/>
            <person name="Talla E."/>
            <person name="Goffard N."/>
            <person name="Frangeul L."/>
            <person name="Aigle M."/>
            <person name="Anthouard V."/>
            <person name="Babour A."/>
            <person name="Barbe V."/>
            <person name="Barnay S."/>
            <person name="Blanchin S."/>
            <person name="Beckerich J.-M."/>
            <person name="Beyne E."/>
            <person name="Bleykasten C."/>
            <person name="Boisrame A."/>
            <person name="Boyer J."/>
            <person name="Cattolico L."/>
            <person name="Confanioleri F."/>
            <person name="de Daruvar A."/>
            <person name="Despons L."/>
            <person name="Fabre E."/>
            <person name="Fairhead C."/>
            <person name="Ferry-Dumazet H."/>
            <person name="Groppi A."/>
            <person name="Hantraye F."/>
            <person name="Hennequin C."/>
            <person name="Jauniaux N."/>
            <person name="Joyet P."/>
            <person name="Kachouri R."/>
            <person name="Kerrest A."/>
            <person name="Koszul R."/>
            <person name="Lemaire M."/>
            <person name="Lesur I."/>
            <person name="Ma L."/>
            <person name="Muller H."/>
            <person name="Nicaud J.-M."/>
            <person name="Nikolski M."/>
            <person name="Oztas S."/>
            <person name="Ozier-Kalogeropoulos O."/>
            <person name="Pellenz S."/>
            <person name="Potier S."/>
            <person name="Richard G.-F."/>
            <person name="Straub M.-L."/>
            <person name="Suleau A."/>
            <person name="Swennen D."/>
            <person name="Tekaia F."/>
            <person name="Wesolowski-Louvel M."/>
            <person name="Westhof E."/>
            <person name="Wirth B."/>
            <person name="Zeniou-Meyer M."/>
            <person name="Zivanovic Y."/>
            <person name="Bolotin-Fukuhara M."/>
            <person name="Thierry A."/>
            <person name="Bouchier C."/>
            <person name="Caudron B."/>
            <person name="Scarpelli C."/>
            <person name="Gaillardin C."/>
            <person name="Weissenbach J."/>
            <person name="Wincker P."/>
            <person name="Souciet J.-L."/>
        </authorList>
    </citation>
    <scope>NUCLEOTIDE SEQUENCE [LARGE SCALE GENOMIC DNA]</scope>
    <source>
        <strain>CLIB 122 / E 150</strain>
    </source>
</reference>
<accession>Q6CDR5</accession>
<proteinExistence type="inferred from homology"/>
<sequence length="394" mass="44190">MSPSVEVTPAHTPTSYEVTNSLDSYRGYDHVHWYVGNAKQAASFYITRMGFSPIAYKGLETGSRDVTTHVVGNGQVRFAFSSALRTGEPQADEIHAHLVKHGDAVKDVAFEVDNVEQLFSAAVKKGVRVISEPKVLKDAHGSVTYAVISTYGDTTHTLIERGSYEGAFLPGFVDTSANKDPIAAFLPNIELMHIDHCVGNQDWNEMDNACKYYEETLGFHRFWSVDDKDICTEFSALKSVVMASPNEKIKMPVNEPAVGKKKSQIEEYIDFYDGPGIQHIALRTDCILDTVRDLRARGVEFISVPGSYYENMKERLAKSSLKLEEKFEDIQALNILIDFDEGGYLLQLFTKPLMDRPTVFIEIIQRRNFEGFGAGNFKSLFEAIEREQAKRGNL</sequence>
<comment type="catalytic activity">
    <reaction>
        <text>3-(4-hydroxyphenyl)pyruvate + O2 = homogentisate + CO2</text>
        <dbReference type="Rhea" id="RHEA:16189"/>
        <dbReference type="ChEBI" id="CHEBI:15379"/>
        <dbReference type="ChEBI" id="CHEBI:16169"/>
        <dbReference type="ChEBI" id="CHEBI:16526"/>
        <dbReference type="ChEBI" id="CHEBI:36242"/>
        <dbReference type="EC" id="1.13.11.27"/>
    </reaction>
</comment>
<comment type="cofactor">
    <cofactor evidence="1">
        <name>Fe cation</name>
        <dbReference type="ChEBI" id="CHEBI:24875"/>
    </cofactor>
    <text evidence="1">Binds 1 Fe cation per subunit.</text>
</comment>
<comment type="pathway">
    <text>Amino-acid degradation; L-phenylalanine degradation; acetoacetate and fumarate from L-phenylalanine: step 3/6.</text>
</comment>
<comment type="similarity">
    <text evidence="3">Belongs to the 4HPPD family.</text>
</comment>
<dbReference type="EC" id="1.13.11.27"/>
<dbReference type="EMBL" id="CR382128">
    <property type="protein sequence ID" value="CAG83450.1"/>
    <property type="molecule type" value="Genomic_DNA"/>
</dbReference>
<dbReference type="RefSeq" id="XP_501197.1">
    <property type="nucleotide sequence ID" value="XM_501197.1"/>
</dbReference>
<dbReference type="SMR" id="Q6CDR5"/>
<dbReference type="STRING" id="284591.Q6CDR5"/>
<dbReference type="EnsemblFungi" id="CAG83450">
    <property type="protein sequence ID" value="CAG83450"/>
    <property type="gene ID" value="YALI0_B21846g"/>
</dbReference>
<dbReference type="KEGG" id="yli:2907146"/>
<dbReference type="VEuPathDB" id="FungiDB:YALI0_B21846g"/>
<dbReference type="HOGENOM" id="CLU_034004_3_1_1"/>
<dbReference type="InParanoid" id="Q6CDR5"/>
<dbReference type="OMA" id="DPFPVKG"/>
<dbReference type="OrthoDB" id="1298at4891"/>
<dbReference type="UniPathway" id="UPA00139">
    <property type="reaction ID" value="UER00362"/>
</dbReference>
<dbReference type="Proteomes" id="UP000001300">
    <property type="component" value="Chromosome B"/>
</dbReference>
<dbReference type="GO" id="GO:0003868">
    <property type="term" value="F:4-hydroxyphenylpyruvate dioxygenase activity"/>
    <property type="evidence" value="ECO:0000318"/>
    <property type="project" value="GO_Central"/>
</dbReference>
<dbReference type="GO" id="GO:0046872">
    <property type="term" value="F:metal ion binding"/>
    <property type="evidence" value="ECO:0007669"/>
    <property type="project" value="UniProtKB-KW"/>
</dbReference>
<dbReference type="GO" id="GO:0006559">
    <property type="term" value="P:L-phenylalanine catabolic process"/>
    <property type="evidence" value="ECO:0007669"/>
    <property type="project" value="UniProtKB-UniPathway"/>
</dbReference>
<dbReference type="GO" id="GO:0006572">
    <property type="term" value="P:tyrosine catabolic process"/>
    <property type="evidence" value="ECO:0000318"/>
    <property type="project" value="GO_Central"/>
</dbReference>
<dbReference type="CDD" id="cd07250">
    <property type="entry name" value="HPPD_C_like"/>
    <property type="match status" value="1"/>
</dbReference>
<dbReference type="CDD" id="cd08342">
    <property type="entry name" value="HPPD_N_like"/>
    <property type="match status" value="1"/>
</dbReference>
<dbReference type="FunFam" id="3.10.180.10:FF:000001">
    <property type="entry name" value="4-hydroxyphenylpyruvate dioxygenase"/>
    <property type="match status" value="1"/>
</dbReference>
<dbReference type="FunFam" id="3.10.180.10:FF:000020">
    <property type="entry name" value="4-hydroxyphenylpyruvate dioxygenase"/>
    <property type="match status" value="1"/>
</dbReference>
<dbReference type="Gene3D" id="3.10.180.10">
    <property type="entry name" value="2,3-Dihydroxybiphenyl 1,2-Dioxygenase, domain 1"/>
    <property type="match status" value="2"/>
</dbReference>
<dbReference type="InterPro" id="IPR005956">
    <property type="entry name" value="4OHPhenylPyrv_dOase"/>
</dbReference>
<dbReference type="InterPro" id="IPR041735">
    <property type="entry name" value="4OHPhenylPyrv_dOase_C"/>
</dbReference>
<dbReference type="InterPro" id="IPR041736">
    <property type="entry name" value="4OHPhenylPyrv_dOase_N"/>
</dbReference>
<dbReference type="InterPro" id="IPR029068">
    <property type="entry name" value="Glyas_Bleomycin-R_OHBP_Dase"/>
</dbReference>
<dbReference type="InterPro" id="IPR004360">
    <property type="entry name" value="Glyas_Fos-R_dOase_dom"/>
</dbReference>
<dbReference type="InterPro" id="IPR037523">
    <property type="entry name" value="VOC"/>
</dbReference>
<dbReference type="NCBIfam" id="TIGR01263">
    <property type="entry name" value="4HPPD"/>
    <property type="match status" value="1"/>
</dbReference>
<dbReference type="PANTHER" id="PTHR11959">
    <property type="entry name" value="4-HYDROXYPHENYLPYRUVATE DIOXYGENASE"/>
    <property type="match status" value="1"/>
</dbReference>
<dbReference type="PANTHER" id="PTHR11959:SF1">
    <property type="entry name" value="4-HYDROXYPHENYLPYRUVATE DIOXYGENASE"/>
    <property type="match status" value="1"/>
</dbReference>
<dbReference type="Pfam" id="PF00903">
    <property type="entry name" value="Glyoxalase"/>
    <property type="match status" value="2"/>
</dbReference>
<dbReference type="PIRSF" id="PIRSF009283">
    <property type="entry name" value="HPP_dOase"/>
    <property type="match status" value="1"/>
</dbReference>
<dbReference type="SUPFAM" id="SSF54593">
    <property type="entry name" value="Glyoxalase/Bleomycin resistance protein/Dihydroxybiphenyl dioxygenase"/>
    <property type="match status" value="1"/>
</dbReference>
<dbReference type="PROSITE" id="PS51819">
    <property type="entry name" value="VOC"/>
    <property type="match status" value="2"/>
</dbReference>
<evidence type="ECO:0000250" key="1"/>
<evidence type="ECO:0000255" key="2">
    <source>
        <dbReference type="PROSITE-ProRule" id="PRU01163"/>
    </source>
</evidence>
<evidence type="ECO:0000305" key="3"/>